<comment type="similarity">
    <text evidence="1">Belongs to the iron-sulfur cluster assembly SufBD family.</text>
</comment>
<name>Y883_PYRHO</name>
<proteinExistence type="inferred from homology"/>
<sequence length="326" mass="36270">MLLNGEDGSMTIKINHVKEYEALVEIYKKEGLDTSLFGNRIAAIIISGDKIIGLNSVPGVKIRGEEVENGVKADIEIADNVKLPFPIHLCTGYLRSEGYQKVIFNIKIGKNSIVKFTSHCIFPYAKDFSHEALTSIKVGENSWVSYEDEHIHGEGVRMISKTEIELNKNARYTGKFSLTKHRAKELKLEMIANLGERSVLELESKVKAVKDDSVEVREVAYLKGAYSRANLKSTVIAFDEARANVVNEAYGFGDYAKGHVECHEIVKGNADVQTVPLLRVKNDKAELTHEASIGRINEAQLMQLMAKGLTDEEATELIIRGLLGEY</sequence>
<dbReference type="EMBL" id="BA000001">
    <property type="protein sequence ID" value="BAA29977.1"/>
    <property type="molecule type" value="Genomic_DNA"/>
</dbReference>
<dbReference type="PIR" id="C71077">
    <property type="entry name" value="C71077"/>
</dbReference>
<dbReference type="SMR" id="O58613"/>
<dbReference type="STRING" id="70601.gene:9377834"/>
<dbReference type="EnsemblBacteria" id="BAA29977">
    <property type="protein sequence ID" value="BAA29977"/>
    <property type="gene ID" value="BAA29977"/>
</dbReference>
<dbReference type="KEGG" id="pho:PH0883"/>
<dbReference type="eggNOG" id="arCOG01716">
    <property type="taxonomic scope" value="Archaea"/>
</dbReference>
<dbReference type="Proteomes" id="UP000000752">
    <property type="component" value="Chromosome"/>
</dbReference>
<dbReference type="GO" id="GO:0016226">
    <property type="term" value="P:iron-sulfur cluster assembly"/>
    <property type="evidence" value="ECO:0007669"/>
    <property type="project" value="InterPro"/>
</dbReference>
<dbReference type="InterPro" id="IPR055346">
    <property type="entry name" value="Fe-S_cluster_assembly_SufBD"/>
</dbReference>
<dbReference type="InterPro" id="IPR000825">
    <property type="entry name" value="SUF_FeS_clus_asmbl_SufBD_core"/>
</dbReference>
<dbReference type="InterPro" id="IPR037284">
    <property type="entry name" value="SUF_FeS_clus_asmbl_SufBD_sf"/>
</dbReference>
<dbReference type="PANTHER" id="PTHR30508">
    <property type="entry name" value="FES CLUSTER ASSEMBLY PROTEIN SUF"/>
    <property type="match status" value="1"/>
</dbReference>
<dbReference type="PANTHER" id="PTHR30508:SF1">
    <property type="entry name" value="UPF0051 PROTEIN ABCI8, CHLOROPLASTIC-RELATED"/>
    <property type="match status" value="1"/>
</dbReference>
<dbReference type="Pfam" id="PF01458">
    <property type="entry name" value="SUFBD_core"/>
    <property type="match status" value="1"/>
</dbReference>
<dbReference type="SUPFAM" id="SSF101960">
    <property type="entry name" value="Stabilizer of iron transporter SufD"/>
    <property type="match status" value="1"/>
</dbReference>
<protein>
    <recommendedName>
        <fullName>Iron-sulfur cluster assembly SufBD family protein PH0883</fullName>
    </recommendedName>
</protein>
<feature type="chain" id="PRO_0000147382" description="Iron-sulfur cluster assembly SufBD family protein PH0883">
    <location>
        <begin position="1"/>
        <end position="326"/>
    </location>
</feature>
<gene>
    <name type="ordered locus">PH0883</name>
</gene>
<reference key="1">
    <citation type="journal article" date="1998" name="DNA Res.">
        <title>Complete sequence and gene organization of the genome of a hyper-thermophilic archaebacterium, Pyrococcus horikoshii OT3.</title>
        <authorList>
            <person name="Kawarabayasi Y."/>
            <person name="Sawada M."/>
            <person name="Horikawa H."/>
            <person name="Haikawa Y."/>
            <person name="Hino Y."/>
            <person name="Yamamoto S."/>
            <person name="Sekine M."/>
            <person name="Baba S."/>
            <person name="Kosugi H."/>
            <person name="Hosoyama A."/>
            <person name="Nagai Y."/>
            <person name="Sakai M."/>
            <person name="Ogura K."/>
            <person name="Otsuka R."/>
            <person name="Nakazawa H."/>
            <person name="Takamiya M."/>
            <person name="Ohfuku Y."/>
            <person name="Funahashi T."/>
            <person name="Tanaka T."/>
            <person name="Kudoh Y."/>
            <person name="Yamazaki J."/>
            <person name="Kushida N."/>
            <person name="Oguchi A."/>
            <person name="Aoki K."/>
            <person name="Yoshizawa T."/>
            <person name="Nakamura Y."/>
            <person name="Robb F.T."/>
            <person name="Horikoshi K."/>
            <person name="Masuchi Y."/>
            <person name="Shizuya H."/>
            <person name="Kikuchi H."/>
        </authorList>
    </citation>
    <scope>NUCLEOTIDE SEQUENCE [LARGE SCALE GENOMIC DNA]</scope>
    <source>
        <strain>ATCC 700860 / DSM 12428 / JCM 9974 / NBRC 100139 / OT-3</strain>
    </source>
</reference>
<accession>O58613</accession>
<organism>
    <name type="scientific">Pyrococcus horikoshii (strain ATCC 700860 / DSM 12428 / JCM 9974 / NBRC 100139 / OT-3)</name>
    <dbReference type="NCBI Taxonomy" id="70601"/>
    <lineage>
        <taxon>Archaea</taxon>
        <taxon>Methanobacteriati</taxon>
        <taxon>Methanobacteriota</taxon>
        <taxon>Thermococci</taxon>
        <taxon>Thermococcales</taxon>
        <taxon>Thermococcaceae</taxon>
        <taxon>Pyrococcus</taxon>
    </lineage>
</organism>
<evidence type="ECO:0000305" key="1"/>